<organism>
    <name type="scientific">Francisella tularensis subsp. mediasiatica (strain FSC147)</name>
    <dbReference type="NCBI Taxonomy" id="441952"/>
    <lineage>
        <taxon>Bacteria</taxon>
        <taxon>Pseudomonadati</taxon>
        <taxon>Pseudomonadota</taxon>
        <taxon>Gammaproteobacteria</taxon>
        <taxon>Thiotrichales</taxon>
        <taxon>Francisellaceae</taxon>
        <taxon>Francisella</taxon>
    </lineage>
</organism>
<gene>
    <name evidence="1" type="primary">nuoH</name>
    <name type="ordered locus">FTM_0101</name>
</gene>
<accession>B2SEV6</accession>
<sequence length="336" mass="37632">MLGYILWTSLYVLLIVIPLILVVAYYTYAERKVIGYMQDRIGPNRVGSFGLLQPIFDALKLFLKEIIVPTNSNRYLFFIAPILAFAPAYAAWAVIPFSKGVVLSDMNLGLLYILAMTSFSIYGIVIAGWASNSKYSLFGALRAGAQVISYELAMGFAIVGVVIAAGSMGITGIIEAQSGGIWHWYFISLFPLFIVYFIAGIAETNRAPFDVVEGESEIVAGHHIEYTGSRFALFFLAEYANMILISILTSIMFLGGWNSPFQATALESIFGFVPGVVWLFAKTGIFMFMFLWVRATYPRYRYDQIMRLGWKIFIPLTFVWVVIVACMVRLGVGPWW</sequence>
<evidence type="ECO:0000255" key="1">
    <source>
        <dbReference type="HAMAP-Rule" id="MF_01350"/>
    </source>
</evidence>
<name>NUOH_FRATM</name>
<feature type="chain" id="PRO_1000143600" description="NADH-quinone oxidoreductase subunit H">
    <location>
        <begin position="1"/>
        <end position="336"/>
    </location>
</feature>
<feature type="transmembrane region" description="Helical" evidence="1">
    <location>
        <begin position="4"/>
        <end position="24"/>
    </location>
</feature>
<feature type="transmembrane region" description="Helical" evidence="1">
    <location>
        <begin position="75"/>
        <end position="95"/>
    </location>
</feature>
<feature type="transmembrane region" description="Helical" evidence="1">
    <location>
        <begin position="108"/>
        <end position="128"/>
    </location>
</feature>
<feature type="transmembrane region" description="Helical" evidence="1">
    <location>
        <begin position="154"/>
        <end position="174"/>
    </location>
</feature>
<feature type="transmembrane region" description="Helical" evidence="1">
    <location>
        <begin position="181"/>
        <end position="201"/>
    </location>
</feature>
<feature type="transmembrane region" description="Helical" evidence="1">
    <location>
        <begin position="233"/>
        <end position="253"/>
    </location>
</feature>
<feature type="transmembrane region" description="Helical" evidence="1">
    <location>
        <begin position="272"/>
        <end position="292"/>
    </location>
</feature>
<feature type="transmembrane region" description="Helical" evidence="1">
    <location>
        <begin position="308"/>
        <end position="328"/>
    </location>
</feature>
<protein>
    <recommendedName>
        <fullName evidence="1">NADH-quinone oxidoreductase subunit H</fullName>
        <ecNumber evidence="1">7.1.1.-</ecNumber>
    </recommendedName>
    <alternativeName>
        <fullName evidence="1">NADH dehydrogenase I subunit H</fullName>
    </alternativeName>
    <alternativeName>
        <fullName evidence="1">NDH-1 subunit H</fullName>
    </alternativeName>
</protein>
<keyword id="KW-0997">Cell inner membrane</keyword>
<keyword id="KW-1003">Cell membrane</keyword>
<keyword id="KW-0472">Membrane</keyword>
<keyword id="KW-0520">NAD</keyword>
<keyword id="KW-0874">Quinone</keyword>
<keyword id="KW-1278">Translocase</keyword>
<keyword id="KW-0812">Transmembrane</keyword>
<keyword id="KW-1133">Transmembrane helix</keyword>
<keyword id="KW-0830">Ubiquinone</keyword>
<proteinExistence type="inferred from homology"/>
<dbReference type="EC" id="7.1.1.-" evidence="1"/>
<dbReference type="EMBL" id="CP000915">
    <property type="protein sequence ID" value="ACD30201.1"/>
    <property type="molecule type" value="Genomic_DNA"/>
</dbReference>
<dbReference type="SMR" id="B2SEV6"/>
<dbReference type="KEGG" id="ftm:FTM_0101"/>
<dbReference type="HOGENOM" id="CLU_015134_0_1_6"/>
<dbReference type="GO" id="GO:0005886">
    <property type="term" value="C:plasma membrane"/>
    <property type="evidence" value="ECO:0007669"/>
    <property type="project" value="UniProtKB-SubCell"/>
</dbReference>
<dbReference type="GO" id="GO:0003954">
    <property type="term" value="F:NADH dehydrogenase activity"/>
    <property type="evidence" value="ECO:0007669"/>
    <property type="project" value="TreeGrafter"/>
</dbReference>
<dbReference type="GO" id="GO:0016655">
    <property type="term" value="F:oxidoreductase activity, acting on NAD(P)H, quinone or similar compound as acceptor"/>
    <property type="evidence" value="ECO:0007669"/>
    <property type="project" value="UniProtKB-UniRule"/>
</dbReference>
<dbReference type="GO" id="GO:0048038">
    <property type="term" value="F:quinone binding"/>
    <property type="evidence" value="ECO:0007669"/>
    <property type="project" value="UniProtKB-KW"/>
</dbReference>
<dbReference type="GO" id="GO:0009060">
    <property type="term" value="P:aerobic respiration"/>
    <property type="evidence" value="ECO:0007669"/>
    <property type="project" value="TreeGrafter"/>
</dbReference>
<dbReference type="HAMAP" id="MF_01350">
    <property type="entry name" value="NDH1_NuoH"/>
    <property type="match status" value="1"/>
</dbReference>
<dbReference type="InterPro" id="IPR001694">
    <property type="entry name" value="NADH_UbQ_OxRdtase_su1/FPO"/>
</dbReference>
<dbReference type="InterPro" id="IPR018086">
    <property type="entry name" value="NADH_UbQ_OxRdtase_su1_CS"/>
</dbReference>
<dbReference type="NCBIfam" id="NF004741">
    <property type="entry name" value="PRK06076.1-2"/>
    <property type="match status" value="1"/>
</dbReference>
<dbReference type="PANTHER" id="PTHR11432">
    <property type="entry name" value="NADH DEHYDROGENASE SUBUNIT 1"/>
    <property type="match status" value="1"/>
</dbReference>
<dbReference type="PANTHER" id="PTHR11432:SF3">
    <property type="entry name" value="NADH-UBIQUINONE OXIDOREDUCTASE CHAIN 1"/>
    <property type="match status" value="1"/>
</dbReference>
<dbReference type="Pfam" id="PF00146">
    <property type="entry name" value="NADHdh"/>
    <property type="match status" value="1"/>
</dbReference>
<dbReference type="PROSITE" id="PS00667">
    <property type="entry name" value="COMPLEX1_ND1_1"/>
    <property type="match status" value="1"/>
</dbReference>
<dbReference type="PROSITE" id="PS00668">
    <property type="entry name" value="COMPLEX1_ND1_2"/>
    <property type="match status" value="1"/>
</dbReference>
<comment type="function">
    <text evidence="1">NDH-1 shuttles electrons from NADH, via FMN and iron-sulfur (Fe-S) centers, to quinones in the respiratory chain. The immediate electron acceptor for the enzyme in this species is believed to be ubiquinone. Couples the redox reaction to proton translocation (for every two electrons transferred, four hydrogen ions are translocated across the cytoplasmic membrane), and thus conserves the redox energy in a proton gradient. This subunit may bind ubiquinone.</text>
</comment>
<comment type="catalytic activity">
    <reaction evidence="1">
        <text>a quinone + NADH + 5 H(+)(in) = a quinol + NAD(+) + 4 H(+)(out)</text>
        <dbReference type="Rhea" id="RHEA:57888"/>
        <dbReference type="ChEBI" id="CHEBI:15378"/>
        <dbReference type="ChEBI" id="CHEBI:24646"/>
        <dbReference type="ChEBI" id="CHEBI:57540"/>
        <dbReference type="ChEBI" id="CHEBI:57945"/>
        <dbReference type="ChEBI" id="CHEBI:132124"/>
    </reaction>
</comment>
<comment type="subunit">
    <text evidence="1">NDH-1 is composed of 14 different subunits. Subunits NuoA, H, J, K, L, M, N constitute the membrane sector of the complex.</text>
</comment>
<comment type="subcellular location">
    <subcellularLocation>
        <location evidence="1">Cell inner membrane</location>
        <topology evidence="1">Multi-pass membrane protein</topology>
    </subcellularLocation>
</comment>
<comment type="similarity">
    <text evidence="1">Belongs to the complex I subunit 1 family.</text>
</comment>
<reference key="1">
    <citation type="journal article" date="2009" name="PLoS Pathog.">
        <title>Molecular evolutionary consequences of niche restriction in Francisella tularensis, a facultative intracellular pathogen.</title>
        <authorList>
            <person name="Larsson P."/>
            <person name="Elfsmark D."/>
            <person name="Svensson K."/>
            <person name="Wikstroem P."/>
            <person name="Forsman M."/>
            <person name="Brettin T."/>
            <person name="Keim P."/>
            <person name="Johansson A."/>
        </authorList>
    </citation>
    <scope>NUCLEOTIDE SEQUENCE [LARGE SCALE GENOMIC DNA]</scope>
    <source>
        <strain>FSC147</strain>
    </source>
</reference>